<feature type="initiator methionine" description="Removed" evidence="3">
    <location>
        <position position="1"/>
    </location>
</feature>
<feature type="chain" id="PRO_0000273451" description="Tripartite motif-containing protein 5">
    <location>
        <begin position="2"/>
        <end position="494"/>
    </location>
</feature>
<feature type="domain" description="B30.2/SPRY" evidence="7">
    <location>
        <begin position="280"/>
        <end position="494"/>
    </location>
</feature>
<feature type="zinc finger region" description="RING-type" evidence="6">
    <location>
        <begin position="15"/>
        <end position="59"/>
    </location>
</feature>
<feature type="zinc finger region" description="B box-type" evidence="5">
    <location>
        <begin position="91"/>
        <end position="132"/>
    </location>
</feature>
<feature type="region of interest" description="Required for interaction with GABARAP and for autophagy" evidence="2">
    <location>
        <begin position="186"/>
        <end position="199"/>
    </location>
</feature>
<feature type="coiled-coil region" evidence="4">
    <location>
        <begin position="140"/>
        <end position="223"/>
    </location>
</feature>
<feature type="binding site" evidence="5">
    <location>
        <position position="96"/>
    </location>
    <ligand>
        <name>Zn(2+)</name>
        <dbReference type="ChEBI" id="CHEBI:29105"/>
    </ligand>
</feature>
<feature type="binding site" evidence="5">
    <location>
        <position position="99"/>
    </location>
    <ligand>
        <name>Zn(2+)</name>
        <dbReference type="ChEBI" id="CHEBI:29105"/>
    </ligand>
</feature>
<feature type="binding site" evidence="5">
    <location>
        <position position="118"/>
    </location>
    <ligand>
        <name>Zn(2+)</name>
        <dbReference type="ChEBI" id="CHEBI:29105"/>
    </ligand>
</feature>
<feature type="binding site" evidence="5">
    <location>
        <position position="124"/>
    </location>
    <ligand>
        <name>Zn(2+)</name>
        <dbReference type="ChEBI" id="CHEBI:29105"/>
    </ligand>
</feature>
<feature type="modified residue" description="N-acetylalanine" evidence="3">
    <location>
        <position position="2"/>
    </location>
</feature>
<feature type="modified residue" description="Phosphoserine" evidence="3">
    <location>
        <position position="86"/>
    </location>
</feature>
<keyword id="KW-0007">Acetylation</keyword>
<keyword id="KW-0051">Antiviral defense</keyword>
<keyword id="KW-0072">Autophagy</keyword>
<keyword id="KW-0175">Coiled coil</keyword>
<keyword id="KW-0963">Cytoplasm</keyword>
<keyword id="KW-0391">Immunity</keyword>
<keyword id="KW-0399">Innate immunity</keyword>
<keyword id="KW-0479">Metal-binding</keyword>
<keyword id="KW-0539">Nucleus</keyword>
<keyword id="KW-0597">Phosphoprotein</keyword>
<keyword id="KW-0808">Transferase</keyword>
<keyword id="KW-0832">Ubl conjugation</keyword>
<keyword id="KW-0833">Ubl conjugation pathway</keyword>
<keyword id="KW-0862">Zinc</keyword>
<keyword id="KW-0863">Zinc-finger</keyword>
<accession>Q5D7H8</accession>
<reference key="1">
    <citation type="journal article" date="2005" name="Proc. Natl. Acad. Sci. U.S.A.">
        <title>Positive selection of primate TRIM5alpha identifies a critical species-specific retroviral restriction domain.</title>
        <authorList>
            <person name="Sawyer S.L."/>
            <person name="Wu L.I."/>
            <person name="Emerman M."/>
            <person name="Malik H.S."/>
        </authorList>
    </citation>
    <scope>NUCLEOTIDE SEQUENCE [GENOMIC DNA]</scope>
</reference>
<proteinExistence type="inferred from homology"/>
<sequence length="494" mass="56782">MASRILVNIKEEVTCPICLELLTEPLSLDCGHSFCQACITANHKESTLHQGERSCPLCRISYPSENLRPNRHLANIVERLREVVLSPEEGQKVDLCARHGEKLLLFCQQDGNVICWLCERSQEHRGHHTFLVEEVAQTYRENLQVVLEMMRQKHQDAEKLEADVREEQASWKIQIQNDKTNIMAEFKQLRDILDCEESNELQNLEKEEKNILKRLVQSENDMVLQTQSISVLISDLEHRLQGSVMELLQGVDGVIKRVKNVTLQKPKTFLNEKRRVFRVPDLKGMLQVSKELTEVQRYWAHVTLVASHPSRAVISEDERQVRYQEWIHQSSGRVKYFYGVLGSPSITSGKHYWEVDVSNKSAWILGVCVSLKCAANRNGPGVENYQPKNGYWVIGLRNADNYSAFQDSVKYNDFQDGSRSTTYAPLIVPLFMTICPNRVGVFLDYEACTVSFFNVTSNGFLIYKFSNCHFSYPVFPYFSPMTCELPMTLCSPRS</sequence>
<evidence type="ECO:0000250" key="1"/>
<evidence type="ECO:0000250" key="2">
    <source>
        <dbReference type="UniProtKB" id="Q0PF16"/>
    </source>
</evidence>
<evidence type="ECO:0000250" key="3">
    <source>
        <dbReference type="UniProtKB" id="Q9C035"/>
    </source>
</evidence>
<evidence type="ECO:0000255" key="4"/>
<evidence type="ECO:0000255" key="5">
    <source>
        <dbReference type="PROSITE-ProRule" id="PRU00024"/>
    </source>
</evidence>
<evidence type="ECO:0000255" key="6">
    <source>
        <dbReference type="PROSITE-ProRule" id="PRU00175"/>
    </source>
</evidence>
<evidence type="ECO:0000255" key="7">
    <source>
        <dbReference type="PROSITE-ProRule" id="PRU00548"/>
    </source>
</evidence>
<evidence type="ECO:0000305" key="8"/>
<comment type="function">
    <text evidence="3">Capsid-specific restriction factor that prevents infection from non-host-adapted retroviruses. Blocks viral replication early in the life cycle, after viral entry but before reverse transcription. In addition to acting as a capsid-specific restriction factor, also acts as a pattern recognition receptor that activates innate immune signaling in response to the retroviral capsid lattice. Binding to the viral capsid triggers its E3 ubiquitin ligase activity, and in concert with the heterodimeric ubiquitin conjugating enzyme complex UBE2V1-UBE2N (also known as UBC13-UEV1A complex) generates 'Lys-63'-linked polyubiquitin chains, which in turn are catalysts in the autophosphorylation of the MAP3K7/TAK1 complex (includes TAK1, TAB2, and TAB3). Activation of the MAP3K7/TAK1 complex by autophosphorylation results in the induction and expression of NF-kappa-B and MAPK-responsive inflammatory genes, thereby leading to an innate immune response in the infected cell. Plays a role in regulating autophagy through activation of autophagy regulator BECN1 by causing its dissociation from its inhibitors BCL2 and TAB2.</text>
</comment>
<comment type="catalytic activity">
    <reaction>
        <text>S-ubiquitinyl-[E2 ubiquitin-conjugating enzyme]-L-cysteine + [acceptor protein]-L-lysine = [E2 ubiquitin-conjugating enzyme]-L-cysteine + N(6)-ubiquitinyl-[acceptor protein]-L-lysine.</text>
        <dbReference type="EC" id="2.3.2.27"/>
    </reaction>
</comment>
<comment type="pathway">
    <text>Protein modification; protein ubiquitination.</text>
</comment>
<comment type="subunit">
    <text evidence="2 3">Can form homodimers and homotrimers. In addition to lower-order dimerization, also exhibits a higher-order multimerization and both low- and high-order multimerizations are essential for its restriction activity. Interacts with BTBD1 and BTBD2. Interacts with PSMC4, PSMC5, PSMD7 and HSPA8/HSC70. Interacts (via B30.2/SPRY domain) with HSPA1A/B. Interacts with PSMC2, MAP3K7/TAK1, TAB2 and TAB3. Interacts with SQSTM1. Interacts with TRIM6 and TRIM34. Interacts with ULK1 (phosphorylated form), GABARAP, GABARAPL1, GABARAPL2, MAP1LC3A, MAP1LC3C and BECN1.</text>
</comment>
<comment type="subcellular location">
    <subcellularLocation>
        <location evidence="2">Cytoplasm</location>
    </subcellularLocation>
    <subcellularLocation>
        <location evidence="2">Nucleus</location>
    </subcellularLocation>
    <text evidence="2">Predominantly localizes in cytoplasmic bodies. Localization may be influenced by the coexpression of other TRIM proteins, hence partial nuclear localization is observed in the presence of TRIM22 or TRIM27. In cytoplasmic bodies, colocalizes with proteasomal subunits and SQSTM1.</text>
</comment>
<comment type="domain">
    <text evidence="2 3">The B box-type zinc finger domain and the coiled-coil domain contribute to the higher and low order multimerization respectively which is essential for restriction activity. The coiled coil domain is important for higher order multimerization by promoting the initial dimerization.</text>
</comment>
<comment type="domain">
    <text evidence="1">The B30.2/SPRY domain acts as a capsid recognition domain. Polymorphisms in this domain explain the observed species-specific differences among orthologs (By similarity).</text>
</comment>
<comment type="domain">
    <text evidence="1">The RING-type zinc finger domain confers E3 ubiquitin ligase activity and is essential for retrovirus restriction activity, autoubiquitination and higher-order multimerization.</text>
</comment>
<comment type="PTM">
    <text evidence="1">Degraded in a proteasome-independent fashion in the absence of viral infection but in a proteasome-dependent fashion following exposure to restriction sensitive virus.</text>
</comment>
<comment type="PTM">
    <text evidence="1">Autoubiquitinated in a RING finger- and UBE2D2-dependent manner. Monoubiquitinated by TRIM21. Deubiquitinated by Yersinia YopJ. Ubiquitination may not lead to proteasomal degradation (By similarity).</text>
</comment>
<comment type="similarity">
    <text evidence="8">Belongs to the TRIM/RBCC family.</text>
</comment>
<gene>
    <name type="primary">TRIM5</name>
</gene>
<organism>
    <name type="scientific">Plecturocebus donacophilus</name>
    <name type="common">Bolivian gray titi monkey</name>
    <name type="synonym">Callicebus donacophilus</name>
    <dbReference type="NCBI Taxonomy" id="230833"/>
    <lineage>
        <taxon>Eukaryota</taxon>
        <taxon>Metazoa</taxon>
        <taxon>Chordata</taxon>
        <taxon>Craniata</taxon>
        <taxon>Vertebrata</taxon>
        <taxon>Euteleostomi</taxon>
        <taxon>Mammalia</taxon>
        <taxon>Eutheria</taxon>
        <taxon>Euarchontoglires</taxon>
        <taxon>Primates</taxon>
        <taxon>Haplorrhini</taxon>
        <taxon>Platyrrhini</taxon>
        <taxon>Pitheciidae</taxon>
        <taxon>Callicebinae</taxon>
        <taxon>Plecturocebus</taxon>
    </lineage>
</organism>
<protein>
    <recommendedName>
        <fullName>Tripartite motif-containing protein 5</fullName>
        <ecNumber>2.3.2.27</ecNumber>
    </recommendedName>
    <alternativeName>
        <fullName evidence="8">RING-type E3 ubiquitin transferase TRIM5</fullName>
    </alternativeName>
    <alternativeName>
        <fullName>TRIM5alpha</fullName>
    </alternativeName>
</protein>
<dbReference type="EC" id="2.3.2.27"/>
<dbReference type="EMBL" id="AY843519">
    <property type="protein sequence ID" value="AAV91990.1"/>
    <property type="molecule type" value="Genomic_DNA"/>
</dbReference>
<dbReference type="SMR" id="Q5D7H8"/>
<dbReference type="UniPathway" id="UPA00143"/>
<dbReference type="GO" id="GO:0005634">
    <property type="term" value="C:nucleus"/>
    <property type="evidence" value="ECO:0007669"/>
    <property type="project" value="UniProtKB-SubCell"/>
</dbReference>
<dbReference type="GO" id="GO:0000932">
    <property type="term" value="C:P-body"/>
    <property type="evidence" value="ECO:0000250"/>
    <property type="project" value="UniProtKB"/>
</dbReference>
<dbReference type="GO" id="GO:0038187">
    <property type="term" value="F:pattern recognition receptor activity"/>
    <property type="evidence" value="ECO:0000250"/>
    <property type="project" value="UniProtKB"/>
</dbReference>
<dbReference type="GO" id="GO:0004842">
    <property type="term" value="F:ubiquitin-protein transferase activity"/>
    <property type="evidence" value="ECO:0000250"/>
    <property type="project" value="UniProtKB"/>
</dbReference>
<dbReference type="GO" id="GO:0008270">
    <property type="term" value="F:zinc ion binding"/>
    <property type="evidence" value="ECO:0007669"/>
    <property type="project" value="UniProtKB-KW"/>
</dbReference>
<dbReference type="GO" id="GO:0002218">
    <property type="term" value="P:activation of innate immune response"/>
    <property type="evidence" value="ECO:0000250"/>
    <property type="project" value="UniProtKB"/>
</dbReference>
<dbReference type="GO" id="GO:0006914">
    <property type="term" value="P:autophagy"/>
    <property type="evidence" value="ECO:0007669"/>
    <property type="project" value="UniProtKB-KW"/>
</dbReference>
<dbReference type="GO" id="GO:0051607">
    <property type="term" value="P:defense response to virus"/>
    <property type="evidence" value="ECO:0007669"/>
    <property type="project" value="UniProtKB-KW"/>
</dbReference>
<dbReference type="GO" id="GO:0045087">
    <property type="term" value="P:innate immune response"/>
    <property type="evidence" value="ECO:0007669"/>
    <property type="project" value="UniProtKB-KW"/>
</dbReference>
<dbReference type="GO" id="GO:0043123">
    <property type="term" value="P:positive regulation of canonical NF-kappaB signal transduction"/>
    <property type="evidence" value="ECO:0000250"/>
    <property type="project" value="UniProtKB"/>
</dbReference>
<dbReference type="GO" id="GO:0043410">
    <property type="term" value="P:positive regulation of MAPK cascade"/>
    <property type="evidence" value="ECO:0000250"/>
    <property type="project" value="UniProtKB"/>
</dbReference>
<dbReference type="GO" id="GO:0051092">
    <property type="term" value="P:positive regulation of NF-kappaB transcription factor activity"/>
    <property type="evidence" value="ECO:0000250"/>
    <property type="project" value="UniProtKB"/>
</dbReference>
<dbReference type="GO" id="GO:0070534">
    <property type="term" value="P:protein K63-linked ubiquitination"/>
    <property type="evidence" value="ECO:0000250"/>
    <property type="project" value="UniProtKB"/>
</dbReference>
<dbReference type="GO" id="GO:0031664">
    <property type="term" value="P:regulation of lipopolysaccharide-mediated signaling pathway"/>
    <property type="evidence" value="ECO:0000250"/>
    <property type="project" value="UniProtKB"/>
</dbReference>
<dbReference type="CDD" id="cd19761">
    <property type="entry name" value="Bbox2_TRIM5-like"/>
    <property type="match status" value="1"/>
</dbReference>
<dbReference type="CDD" id="cd16591">
    <property type="entry name" value="RING-HC_TRIM5-like_C-IV"/>
    <property type="match status" value="1"/>
</dbReference>
<dbReference type="CDD" id="cd15822">
    <property type="entry name" value="SPRY_PRY_TRIM5"/>
    <property type="match status" value="1"/>
</dbReference>
<dbReference type="FunFam" id="3.30.160.60:FF:000386">
    <property type="entry name" value="Tripartite motif-containing 5 (Predicted)"/>
    <property type="match status" value="1"/>
</dbReference>
<dbReference type="FunFam" id="3.30.40.10:FF:000144">
    <property type="entry name" value="Tripartite motif-containing 5 (Predicted)"/>
    <property type="match status" value="1"/>
</dbReference>
<dbReference type="Gene3D" id="2.60.120.920">
    <property type="match status" value="1"/>
</dbReference>
<dbReference type="Gene3D" id="3.30.160.60">
    <property type="entry name" value="Classic Zinc Finger"/>
    <property type="match status" value="1"/>
</dbReference>
<dbReference type="Gene3D" id="3.30.40.10">
    <property type="entry name" value="Zinc/RING finger domain, C3HC4 (zinc finger)"/>
    <property type="match status" value="1"/>
</dbReference>
<dbReference type="InterPro" id="IPR001870">
    <property type="entry name" value="B30.2/SPRY"/>
</dbReference>
<dbReference type="InterPro" id="IPR043136">
    <property type="entry name" value="B30.2/SPRY_sf"/>
</dbReference>
<dbReference type="InterPro" id="IPR003879">
    <property type="entry name" value="Butyrophylin_SPRY"/>
</dbReference>
<dbReference type="InterPro" id="IPR013320">
    <property type="entry name" value="ConA-like_dom_sf"/>
</dbReference>
<dbReference type="InterPro" id="IPR003877">
    <property type="entry name" value="SPRY_dom"/>
</dbReference>
<dbReference type="InterPro" id="IPR050143">
    <property type="entry name" value="TRIM/RBCC"/>
</dbReference>
<dbReference type="InterPro" id="IPR027370">
    <property type="entry name" value="Znf-RING_euk"/>
</dbReference>
<dbReference type="InterPro" id="IPR000315">
    <property type="entry name" value="Znf_B-box"/>
</dbReference>
<dbReference type="InterPro" id="IPR001841">
    <property type="entry name" value="Znf_RING"/>
</dbReference>
<dbReference type="InterPro" id="IPR013083">
    <property type="entry name" value="Znf_RING/FYVE/PHD"/>
</dbReference>
<dbReference type="InterPro" id="IPR017907">
    <property type="entry name" value="Znf_RING_CS"/>
</dbReference>
<dbReference type="PANTHER" id="PTHR24103">
    <property type="entry name" value="E3 UBIQUITIN-PROTEIN LIGASE TRIM"/>
    <property type="match status" value="1"/>
</dbReference>
<dbReference type="Pfam" id="PF00622">
    <property type="entry name" value="SPRY"/>
    <property type="match status" value="1"/>
</dbReference>
<dbReference type="Pfam" id="PF00643">
    <property type="entry name" value="zf-B_box"/>
    <property type="match status" value="1"/>
</dbReference>
<dbReference type="Pfam" id="PF13445">
    <property type="entry name" value="zf-RING_UBOX"/>
    <property type="match status" value="1"/>
</dbReference>
<dbReference type="PRINTS" id="PR01407">
    <property type="entry name" value="BUTYPHLNCDUF"/>
</dbReference>
<dbReference type="SMART" id="SM00336">
    <property type="entry name" value="BBOX"/>
    <property type="match status" value="1"/>
</dbReference>
<dbReference type="SMART" id="SM00184">
    <property type="entry name" value="RING"/>
    <property type="match status" value="1"/>
</dbReference>
<dbReference type="SMART" id="SM00449">
    <property type="entry name" value="SPRY"/>
    <property type="match status" value="1"/>
</dbReference>
<dbReference type="SUPFAM" id="SSF57845">
    <property type="entry name" value="B-box zinc-binding domain"/>
    <property type="match status" value="1"/>
</dbReference>
<dbReference type="SUPFAM" id="SSF49899">
    <property type="entry name" value="Concanavalin A-like lectins/glucanases"/>
    <property type="match status" value="1"/>
</dbReference>
<dbReference type="SUPFAM" id="SSF57850">
    <property type="entry name" value="RING/U-box"/>
    <property type="match status" value="1"/>
</dbReference>
<dbReference type="PROSITE" id="PS50188">
    <property type="entry name" value="B302_SPRY"/>
    <property type="match status" value="1"/>
</dbReference>
<dbReference type="PROSITE" id="PS50119">
    <property type="entry name" value="ZF_BBOX"/>
    <property type="match status" value="1"/>
</dbReference>
<dbReference type="PROSITE" id="PS00518">
    <property type="entry name" value="ZF_RING_1"/>
    <property type="match status" value="1"/>
</dbReference>
<dbReference type="PROSITE" id="PS50089">
    <property type="entry name" value="ZF_RING_2"/>
    <property type="match status" value="1"/>
</dbReference>
<name>TRIM5_PLEDO</name>